<organism>
    <name type="scientific">Bos taurus</name>
    <name type="common">Bovine</name>
    <dbReference type="NCBI Taxonomy" id="9913"/>
    <lineage>
        <taxon>Eukaryota</taxon>
        <taxon>Metazoa</taxon>
        <taxon>Chordata</taxon>
        <taxon>Craniata</taxon>
        <taxon>Vertebrata</taxon>
        <taxon>Euteleostomi</taxon>
        <taxon>Mammalia</taxon>
        <taxon>Eutheria</taxon>
        <taxon>Laurasiatheria</taxon>
        <taxon>Artiodactyla</taxon>
        <taxon>Ruminantia</taxon>
        <taxon>Pecora</taxon>
        <taxon>Bovidae</taxon>
        <taxon>Bovinae</taxon>
        <taxon>Bos</taxon>
    </lineage>
</organism>
<sequence length="224" mass="25139">MESGAYGAPRAGGSFDLRRFLKQPQVVVRAVCLVFALIVFSCIFGEGYSNTHDSQQQYCVFNRNEDACRYGSAIGVLAFLASAFFFVVDIYFPQISNATDRKYLVIGDLLFSALWTFLWFVGFCFLTNQWAATKKNDVHVEADSARAAITFSFFSIFSWCVLAFLAYQRYKAGVDEFIQNYVDPTPDPSTAYASYPGVPADTYQQPPFTQNAESTEGYQPPPVY</sequence>
<protein>
    <recommendedName>
        <fullName evidence="6">Synaptogyrin-2</fullName>
    </recommendedName>
    <alternativeName>
        <fullName evidence="2">Cellugyrin</fullName>
    </alternativeName>
</protein>
<evidence type="ECO:0000250" key="1">
    <source>
        <dbReference type="UniProtKB" id="O43760"/>
    </source>
</evidence>
<evidence type="ECO:0000250" key="2">
    <source>
        <dbReference type="UniProtKB" id="O54980"/>
    </source>
</evidence>
<evidence type="ECO:0000255" key="3"/>
<evidence type="ECO:0000255" key="4">
    <source>
        <dbReference type="PROSITE-ProRule" id="PRU00581"/>
    </source>
</evidence>
<evidence type="ECO:0000256" key="5">
    <source>
        <dbReference type="SAM" id="MobiDB-lite"/>
    </source>
</evidence>
<evidence type="ECO:0000305" key="6"/>
<accession>A7E3W5</accession>
<gene>
    <name evidence="1" type="primary">SYNGR2</name>
</gene>
<keyword id="KW-0007">Acetylation</keyword>
<keyword id="KW-0968">Cytoplasmic vesicle</keyword>
<keyword id="KW-0472">Membrane</keyword>
<keyword id="KW-0597">Phosphoprotein</keyword>
<keyword id="KW-1185">Reference proteome</keyword>
<keyword id="KW-0770">Synapse</keyword>
<keyword id="KW-0812">Transmembrane</keyword>
<keyword id="KW-1133">Transmembrane helix</keyword>
<comment type="function">
    <text evidence="2">May play a role in regulated exocytosis. In neuronal cells, modulates the localization of synaptophysin/SYP into synaptic-like microvesicles and may therefore play a role in the formation and/or the maturation of this vesicles. May also play a role in GLUT4 storage and transport to the plasma membrane.</text>
</comment>
<comment type="subcellular location">
    <subcellularLocation>
        <location evidence="2">Cytoplasmic vesicle membrane</location>
        <topology evidence="3">Multi-pass membrane protein</topology>
    </subcellularLocation>
    <subcellularLocation>
        <location evidence="2">Cytoplasmic vesicle</location>
        <location evidence="2">Secretory vesicle</location>
        <location evidence="2">Synaptic vesicle membrane</location>
        <topology evidence="3">Multi-pass membrane protein</topology>
    </subcellularLocation>
</comment>
<comment type="PTM">
    <text evidence="2">May be tyrosine phosphorylated by Src.</text>
</comment>
<comment type="similarity">
    <text evidence="6">Belongs to the synaptogyrin family.</text>
</comment>
<dbReference type="EMBL" id="BT030736">
    <property type="protein sequence ID" value="ABS45052.1"/>
    <property type="molecule type" value="mRNA"/>
</dbReference>
<dbReference type="RefSeq" id="NP_001093828.1">
    <property type="nucleotide sequence ID" value="NM_001100358.1"/>
</dbReference>
<dbReference type="SMR" id="A7E3W5"/>
<dbReference type="FunCoup" id="A7E3W5">
    <property type="interactions" value="614"/>
</dbReference>
<dbReference type="STRING" id="9913.ENSBTAP00000025388"/>
<dbReference type="PaxDb" id="9913-ENSBTAP00000025388"/>
<dbReference type="Ensembl" id="ENSBTAT00000025388.5">
    <property type="protein sequence ID" value="ENSBTAP00000025388.4"/>
    <property type="gene ID" value="ENSBTAG00000019069.6"/>
</dbReference>
<dbReference type="GeneID" id="513812"/>
<dbReference type="KEGG" id="bta:513812"/>
<dbReference type="CTD" id="9144"/>
<dbReference type="VEuPathDB" id="HostDB:ENSBTAG00000019069"/>
<dbReference type="VGNC" id="VGNC:107278">
    <property type="gene designation" value="SYNGR2"/>
</dbReference>
<dbReference type="eggNOG" id="KOG4016">
    <property type="taxonomic scope" value="Eukaryota"/>
</dbReference>
<dbReference type="GeneTree" id="ENSGT00950000182935"/>
<dbReference type="HOGENOM" id="CLU_079186_1_0_1"/>
<dbReference type="InParanoid" id="A7E3W5"/>
<dbReference type="OMA" id="MQSSAYG"/>
<dbReference type="OrthoDB" id="10041611at2759"/>
<dbReference type="TreeFam" id="TF320995"/>
<dbReference type="Proteomes" id="UP000009136">
    <property type="component" value="Chromosome 19"/>
</dbReference>
<dbReference type="Bgee" id="ENSBTAG00000019069">
    <property type="expression patterns" value="Expressed in choroid plexus and 106 other cell types or tissues"/>
</dbReference>
<dbReference type="GO" id="GO:0031594">
    <property type="term" value="C:neuromuscular junction"/>
    <property type="evidence" value="ECO:0000318"/>
    <property type="project" value="GO_Central"/>
</dbReference>
<dbReference type="GO" id="GO:0030672">
    <property type="term" value="C:synaptic vesicle membrane"/>
    <property type="evidence" value="ECO:0000250"/>
    <property type="project" value="UniProtKB"/>
</dbReference>
<dbReference type="GO" id="GO:0045055">
    <property type="term" value="P:regulated exocytosis"/>
    <property type="evidence" value="ECO:0000250"/>
    <property type="project" value="UniProtKB"/>
</dbReference>
<dbReference type="GO" id="GO:0048499">
    <property type="term" value="P:synaptic vesicle membrane organization"/>
    <property type="evidence" value="ECO:0000250"/>
    <property type="project" value="UniProtKB"/>
</dbReference>
<dbReference type="InterPro" id="IPR008253">
    <property type="entry name" value="Marvel"/>
</dbReference>
<dbReference type="InterPro" id="IPR016579">
    <property type="entry name" value="Synaptogyrin"/>
</dbReference>
<dbReference type="PANTHER" id="PTHR10838">
    <property type="entry name" value="SYNAPTOGYRIN"/>
    <property type="match status" value="1"/>
</dbReference>
<dbReference type="PANTHER" id="PTHR10838:SF19">
    <property type="entry name" value="SYNAPTOGYRIN-2 LIKE PROTEIN-RELATED"/>
    <property type="match status" value="1"/>
</dbReference>
<dbReference type="Pfam" id="PF01284">
    <property type="entry name" value="MARVEL"/>
    <property type="match status" value="1"/>
</dbReference>
<dbReference type="PIRSF" id="PIRSF011282">
    <property type="entry name" value="Synaptogyrin"/>
    <property type="match status" value="1"/>
</dbReference>
<dbReference type="PROSITE" id="PS51225">
    <property type="entry name" value="MARVEL"/>
    <property type="match status" value="1"/>
</dbReference>
<proteinExistence type="evidence at transcript level"/>
<feature type="chain" id="PRO_0000343947" description="Synaptogyrin-2">
    <location>
        <begin position="1"/>
        <end position="224"/>
    </location>
</feature>
<feature type="transmembrane region" description="Helical" evidence="3">
    <location>
        <begin position="26"/>
        <end position="46"/>
    </location>
</feature>
<feature type="transmembrane region" description="Helical" evidence="3">
    <location>
        <begin position="73"/>
        <end position="93"/>
    </location>
</feature>
<feature type="transmembrane region" description="Helical" evidence="3">
    <location>
        <begin position="105"/>
        <end position="125"/>
    </location>
</feature>
<feature type="transmembrane region" description="Helical" evidence="3">
    <location>
        <begin position="147"/>
        <end position="167"/>
    </location>
</feature>
<feature type="domain" description="MARVEL" evidence="4">
    <location>
        <begin position="20"/>
        <end position="171"/>
    </location>
</feature>
<feature type="region of interest" description="Disordered" evidence="5">
    <location>
        <begin position="196"/>
        <end position="224"/>
    </location>
</feature>
<feature type="compositionally biased region" description="Polar residues" evidence="5">
    <location>
        <begin position="202"/>
        <end position="217"/>
    </location>
</feature>
<feature type="modified residue" description="N-acetylmethionine" evidence="1">
    <location>
        <position position="1"/>
    </location>
</feature>
<feature type="modified residue" description="Phosphoserine" evidence="1">
    <location>
        <position position="3"/>
    </location>
</feature>
<name>SNG2_BOVIN</name>
<reference key="1">
    <citation type="journal article" date="2005" name="BMC Genomics">
        <title>Characterization of 954 bovine full-CDS cDNA sequences.</title>
        <authorList>
            <person name="Harhay G.P."/>
            <person name="Sonstegard T.S."/>
            <person name="Keele J.W."/>
            <person name="Heaton M.P."/>
            <person name="Clawson M.L."/>
            <person name="Snelling W.M."/>
            <person name="Wiedmann R.T."/>
            <person name="Van Tassell C.P."/>
            <person name="Smith T.P.L."/>
        </authorList>
    </citation>
    <scope>NUCLEOTIDE SEQUENCE [LARGE SCALE MRNA]</scope>
</reference>